<name>Y4BL_SINFN</name>
<evidence type="ECO:0000255" key="1">
    <source>
        <dbReference type="PROSITE-ProRule" id="PRU00457"/>
    </source>
</evidence>
<evidence type="ECO:0000255" key="2">
    <source>
        <dbReference type="PROSITE-ProRule" id="PRU00616"/>
    </source>
</evidence>
<evidence type="ECO:0000256" key="3">
    <source>
        <dbReference type="SAM" id="MobiDB-lite"/>
    </source>
</evidence>
<evidence type="ECO:0000305" key="4"/>
<gene>
    <name type="ordered locus">NGR_a00180</name>
    <name type="ORF">y4bL</name>
</gene>
<gene>
    <name type="ordered locus">NGR_a02860</name>
    <name type="ORF">y4kJ</name>
</gene>
<gene>
    <name type="ordered locus">NGR_a01560</name>
    <name type="ORF">y4tB</name>
</gene>
<dbReference type="EMBL" id="U00090">
    <property type="protein sequence ID" value="AAB91627.1"/>
    <property type="molecule type" value="Genomic_DNA"/>
</dbReference>
<dbReference type="EMBL" id="U00090">
    <property type="protein sequence ID" value="AAB91741.1"/>
    <property type="molecule type" value="Genomic_DNA"/>
</dbReference>
<dbReference type="EMBL" id="U00090">
    <property type="protein sequence ID" value="AAB91856.1"/>
    <property type="molecule type" value="Genomic_DNA"/>
</dbReference>
<dbReference type="RefSeq" id="NP_443789.1">
    <property type="nucleotide sequence ID" value="NC_000914.2"/>
</dbReference>
<dbReference type="RefSeq" id="NP_443939.1">
    <property type="nucleotide sequence ID" value="NC_000914.2"/>
</dbReference>
<dbReference type="RefSeq" id="NP_444069.1">
    <property type="nucleotide sequence ID" value="NC_000914.2"/>
</dbReference>
<dbReference type="RefSeq" id="WP_010875060.1">
    <property type="nucleotide sequence ID" value="NC_000914.2"/>
</dbReference>
<dbReference type="RefSeq" id="YP_002822318.1">
    <property type="nucleotide sequence ID" value="NC_012586.1"/>
</dbReference>
<dbReference type="RefSeq" id="YP_002823144.1">
    <property type="nucleotide sequence ID" value="NC_012586.1"/>
</dbReference>
<dbReference type="RefSeq" id="YP_002823695.1">
    <property type="nucleotide sequence ID" value="NC_012586.1"/>
</dbReference>
<dbReference type="RefSeq" id="YP_002826747.1">
    <property type="nucleotide sequence ID" value="NC_012587.1"/>
</dbReference>
<dbReference type="SMR" id="P55379"/>
<dbReference type="STRING" id="394.NGR_c22340"/>
<dbReference type="KEGG" id="rhi:NGR_a00180"/>
<dbReference type="KEGG" id="rhi:NGR_a01560"/>
<dbReference type="KEGG" id="rhi:NGR_a02860"/>
<dbReference type="eggNOG" id="COG2390">
    <property type="taxonomic scope" value="Bacteria"/>
</dbReference>
<dbReference type="eggNOG" id="COG4584">
    <property type="taxonomic scope" value="Bacteria"/>
</dbReference>
<dbReference type="HOGENOM" id="CLU_020626_11_0_5"/>
<dbReference type="OrthoDB" id="2065409at2"/>
<dbReference type="Proteomes" id="UP000001054">
    <property type="component" value="Plasmid pNGR234a"/>
</dbReference>
<dbReference type="GO" id="GO:0003677">
    <property type="term" value="F:DNA binding"/>
    <property type="evidence" value="ECO:0007669"/>
    <property type="project" value="UniProtKB-KW"/>
</dbReference>
<dbReference type="GO" id="GO:0016987">
    <property type="term" value="F:sigma factor activity"/>
    <property type="evidence" value="ECO:0007669"/>
    <property type="project" value="InterPro"/>
</dbReference>
<dbReference type="GO" id="GO:0015074">
    <property type="term" value="P:DNA integration"/>
    <property type="evidence" value="ECO:0007669"/>
    <property type="project" value="InterPro"/>
</dbReference>
<dbReference type="GO" id="GO:0006310">
    <property type="term" value="P:DNA recombination"/>
    <property type="evidence" value="ECO:0007669"/>
    <property type="project" value="UniProtKB-KW"/>
</dbReference>
<dbReference type="GO" id="GO:0006352">
    <property type="term" value="P:DNA-templated transcription initiation"/>
    <property type="evidence" value="ECO:0007669"/>
    <property type="project" value="InterPro"/>
</dbReference>
<dbReference type="GO" id="GO:0032196">
    <property type="term" value="P:transposition"/>
    <property type="evidence" value="ECO:0007669"/>
    <property type="project" value="UniProtKB-KW"/>
</dbReference>
<dbReference type="CDD" id="cd00090">
    <property type="entry name" value="HTH_ARSR"/>
    <property type="match status" value="1"/>
</dbReference>
<dbReference type="Gene3D" id="1.10.10.60">
    <property type="entry name" value="Homeodomain-like"/>
    <property type="match status" value="1"/>
</dbReference>
<dbReference type="Gene3D" id="3.30.420.10">
    <property type="entry name" value="Ribonuclease H-like superfamily/Ribonuclease H"/>
    <property type="match status" value="1"/>
</dbReference>
<dbReference type="InterPro" id="IPR011991">
    <property type="entry name" value="ArsR-like_HTH"/>
</dbReference>
<dbReference type="InterPro" id="IPR009057">
    <property type="entry name" value="Homeodomain-like_sf"/>
</dbReference>
<dbReference type="InterPro" id="IPR017895">
    <property type="entry name" value="HTH_IS408/IS1162_type"/>
</dbReference>
<dbReference type="InterPro" id="IPR001584">
    <property type="entry name" value="Integrase_cat-core"/>
</dbReference>
<dbReference type="InterPro" id="IPR054353">
    <property type="entry name" value="IstA-like_C"/>
</dbReference>
<dbReference type="InterPro" id="IPR013249">
    <property type="entry name" value="RNA_pol_sigma70_r4_t2"/>
</dbReference>
<dbReference type="InterPro" id="IPR012337">
    <property type="entry name" value="RNaseH-like_sf"/>
</dbReference>
<dbReference type="InterPro" id="IPR036397">
    <property type="entry name" value="RNaseH_sf"/>
</dbReference>
<dbReference type="NCBIfam" id="NF033546">
    <property type="entry name" value="transpos_IS21"/>
    <property type="match status" value="1"/>
</dbReference>
<dbReference type="PANTHER" id="PTHR35004">
    <property type="entry name" value="TRANSPOSASE RV3428C-RELATED"/>
    <property type="match status" value="1"/>
</dbReference>
<dbReference type="PANTHER" id="PTHR35004:SF8">
    <property type="entry name" value="TRANSPOSASE RV3428C-RELATED"/>
    <property type="match status" value="1"/>
</dbReference>
<dbReference type="Pfam" id="PF22483">
    <property type="entry name" value="Mu-transpos_C_2"/>
    <property type="match status" value="1"/>
</dbReference>
<dbReference type="Pfam" id="PF08281">
    <property type="entry name" value="Sigma70_r4_2"/>
    <property type="match status" value="1"/>
</dbReference>
<dbReference type="SUPFAM" id="SSF46689">
    <property type="entry name" value="Homeodomain-like"/>
    <property type="match status" value="1"/>
</dbReference>
<dbReference type="SUPFAM" id="SSF53098">
    <property type="entry name" value="Ribonuclease H-like"/>
    <property type="match status" value="1"/>
</dbReference>
<dbReference type="PROSITE" id="PS50532">
    <property type="entry name" value="HTH_IS408"/>
    <property type="match status" value="1"/>
</dbReference>
<dbReference type="PROSITE" id="PS50994">
    <property type="entry name" value="INTEGRASE"/>
    <property type="match status" value="1"/>
</dbReference>
<keyword id="KW-0233">DNA recombination</keyword>
<keyword id="KW-0238">DNA-binding</keyword>
<keyword id="KW-0614">Plasmid</keyword>
<keyword id="KW-1185">Reference proteome</keyword>
<keyword id="KW-0814">Transposable element</keyword>
<keyword id="KW-0815">Transposition</keyword>
<comment type="similarity">
    <text evidence="4">Belongs to the transposase IS21/IS408/IS1162 family.</text>
</comment>
<accession>P55379</accession>
<proteinExistence type="inferred from homology"/>
<organism>
    <name type="scientific">Sinorhizobium fredii (strain NBRC 101917 / NGR234)</name>
    <dbReference type="NCBI Taxonomy" id="394"/>
    <lineage>
        <taxon>Bacteria</taxon>
        <taxon>Pseudomonadati</taxon>
        <taxon>Pseudomonadota</taxon>
        <taxon>Alphaproteobacteria</taxon>
        <taxon>Hyphomicrobiales</taxon>
        <taxon>Rhizobiaceae</taxon>
        <taxon>Sinorhizobium/Ensifer group</taxon>
        <taxon>Sinorhizobium</taxon>
    </lineage>
</organism>
<sequence length="516" mass="58267">MPRRKQARRTTVRDIRTILRLTHEEGLSVREIAERLKIGKSSVSTYLLRSREAGLSWPLPIGADEDAKLERRLFGRAGRPPRDLSEPDWALVVRELKRKGVTLTLLWQEYRASHPDGYGFTWFCEQVAAFRQRTSVAFRNRHAAGAVMQTDYAGPTVPVIDPATGVIHPAQIFVAVLGASNLTFAHASFSQQLPDWIDGQVRALTFYGGVTKAIVCDNLKSGVAKALWFEPTLTATFAAMAEHYDTTILPTRSRKPRDKGRVEGAVLIVERWILARLRNRTFFSLAALNTAIAELLEDLNNRTMRHVGKSRRELFEEIERPALKPLPAIPFEYAEWKSAKVHPDYHVEVDKTFYSVPHRLIGCTLQVRLTHRVVEIFHDHQRVASHVRRSQRSGHVTVNDHMPKAHQRYANTTPANLIGRATQIGPNAAILVERMMRDRPHPEQGYRSAMGILSLAPRYGSQRLEAACERALTINAITYSSVASILKSGLDRERPQAEHAAPTPAHTNIRGRSYYQ</sequence>
<protein>
    <recommendedName>
        <fullName>Putative transposase y4bL/y4kJ/y4tB</fullName>
    </recommendedName>
</protein>
<feature type="chain" id="PRO_0000075472" description="Putative transposase y4bL/y4kJ/y4tB">
    <location>
        <begin position="1"/>
        <end position="516"/>
    </location>
</feature>
<feature type="domain" description="HTH IS408-type" evidence="2">
    <location>
        <begin position="15"/>
        <end position="96"/>
    </location>
</feature>
<feature type="domain" description="Integrase catalytic" evidence="1">
    <location>
        <begin position="138"/>
        <end position="319"/>
    </location>
</feature>
<feature type="region of interest" description="Disordered" evidence="3">
    <location>
        <begin position="493"/>
        <end position="516"/>
    </location>
</feature>
<reference key="1">
    <citation type="journal article" date="1997" name="Nature">
        <title>Molecular basis of symbiosis between Rhizobium and legumes.</title>
        <authorList>
            <person name="Freiberg C.A."/>
            <person name="Fellay R."/>
            <person name="Bairoch A."/>
            <person name="Broughton W.J."/>
            <person name="Rosenthal A."/>
            <person name="Perret X."/>
        </authorList>
    </citation>
    <scope>NUCLEOTIDE SEQUENCE [LARGE SCALE GENOMIC DNA]</scope>
    <source>
        <strain>NBRC 101917 / NGR234</strain>
    </source>
</reference>
<reference key="2">
    <citation type="journal article" date="2009" name="Appl. Environ. Microbiol.">
        <title>Rhizobium sp. strain NGR234 possesses a remarkable number of secretion systems.</title>
        <authorList>
            <person name="Schmeisser C."/>
            <person name="Liesegang H."/>
            <person name="Krysciak D."/>
            <person name="Bakkou N."/>
            <person name="Le Quere A."/>
            <person name="Wollherr A."/>
            <person name="Heinemeyer I."/>
            <person name="Morgenstern B."/>
            <person name="Pommerening-Roeser A."/>
            <person name="Flores M."/>
            <person name="Palacios R."/>
            <person name="Brenner S."/>
            <person name="Gottschalk G."/>
            <person name="Schmitz R.A."/>
            <person name="Broughton W.J."/>
            <person name="Perret X."/>
            <person name="Strittmatter A.W."/>
            <person name="Streit W.R."/>
        </authorList>
    </citation>
    <scope>NUCLEOTIDE SEQUENCE [LARGE SCALE GENOMIC DNA]</scope>
    <source>
        <strain>NBRC 101917 / NGR234</strain>
    </source>
</reference>
<geneLocation type="plasmid">
    <name>sym pNGR234a</name>
</geneLocation>